<protein>
    <recommendedName>
        <fullName evidence="1">Non-structural glycoprotein 4</fullName>
        <shortName evidence="1">NSP4</shortName>
    </recommendedName>
    <alternativeName>
        <fullName evidence="1">NCVP5</fullName>
    </alternativeName>
    <alternativeName>
        <fullName evidence="1">NS28</fullName>
    </alternativeName>
</protein>
<reference key="1">
    <citation type="journal article" date="2002" name="J. Virol.">
        <title>Diarrhea-inducing activity of avian rotavirus NSP4 glycoproteins, which differ greatly from mammalian rotavirus NSP4 glycoproteins in deduced amino acid sequence in suckling mice.</title>
        <authorList>
            <person name="Mori Y."/>
            <person name="Borgan M.A."/>
            <person name="Ito N."/>
            <person name="Sugiyama M."/>
            <person name="Minamoto N."/>
        </authorList>
    </citation>
    <scope>NUCLEOTIDE SEQUENCE [GENOMIC RNA]</scope>
</reference>
<organism>
    <name type="scientific">Rotavirus A (strain RVA/Turkey/Ireland/Ty-1/1978/G7P[17])</name>
    <name type="common">RV-A</name>
    <dbReference type="NCBI Taxonomy" id="12584"/>
    <lineage>
        <taxon>Viruses</taxon>
        <taxon>Riboviria</taxon>
        <taxon>Orthornavirae</taxon>
        <taxon>Duplornaviricota</taxon>
        <taxon>Resentoviricetes</taxon>
        <taxon>Reovirales</taxon>
        <taxon>Sedoreoviridae</taxon>
        <taxon>Rotavirus</taxon>
        <taxon>Rotavirus A</taxon>
    </lineage>
</organism>
<evidence type="ECO:0000255" key="1">
    <source>
        <dbReference type="HAMAP-Rule" id="MF_04091"/>
    </source>
</evidence>
<dbReference type="EMBL" id="AB065285">
    <property type="protein sequence ID" value="BAB83745.1"/>
    <property type="molecule type" value="Genomic_RNA"/>
</dbReference>
<dbReference type="SMR" id="Q8V790"/>
<dbReference type="GO" id="GO:0005576">
    <property type="term" value="C:extracellular region"/>
    <property type="evidence" value="ECO:0007669"/>
    <property type="project" value="UniProtKB-SubCell"/>
</dbReference>
<dbReference type="GO" id="GO:0044155">
    <property type="term" value="C:host caveola"/>
    <property type="evidence" value="ECO:0007669"/>
    <property type="project" value="UniProtKB-SubCell"/>
</dbReference>
<dbReference type="GO" id="GO:0044169">
    <property type="term" value="C:host cell rough endoplasmic reticulum membrane"/>
    <property type="evidence" value="ECO:0007669"/>
    <property type="project" value="UniProtKB-SubCell"/>
</dbReference>
<dbReference type="GO" id="GO:0016020">
    <property type="term" value="C:membrane"/>
    <property type="evidence" value="ECO:0007669"/>
    <property type="project" value="UniProtKB-UniRule"/>
</dbReference>
<dbReference type="GO" id="GO:0015267">
    <property type="term" value="F:channel activity"/>
    <property type="evidence" value="ECO:0007669"/>
    <property type="project" value="UniProtKB-KW"/>
</dbReference>
<dbReference type="GO" id="GO:0046872">
    <property type="term" value="F:metal ion binding"/>
    <property type="evidence" value="ECO:0007669"/>
    <property type="project" value="UniProtKB-UniRule"/>
</dbReference>
<dbReference type="GO" id="GO:0090729">
    <property type="term" value="F:toxin activity"/>
    <property type="evidence" value="ECO:0007669"/>
    <property type="project" value="UniProtKB-UniRule"/>
</dbReference>
<dbReference type="GO" id="GO:0034220">
    <property type="term" value="P:monoatomic ion transmembrane transport"/>
    <property type="evidence" value="ECO:0007669"/>
    <property type="project" value="UniProtKB-KW"/>
</dbReference>
<dbReference type="GO" id="GO:0039520">
    <property type="term" value="P:symbiont-mediated activation of host autophagy"/>
    <property type="evidence" value="ECO:0007669"/>
    <property type="project" value="UniProtKB-KW"/>
</dbReference>
<dbReference type="GO" id="GO:0016032">
    <property type="term" value="P:viral process"/>
    <property type="evidence" value="ECO:0007669"/>
    <property type="project" value="UniProtKB-UniRule"/>
</dbReference>
<dbReference type="Gene3D" id="1.20.5.430">
    <property type="match status" value="1"/>
</dbReference>
<dbReference type="HAMAP" id="MF_04091">
    <property type="entry name" value="ROTA_NSP4"/>
    <property type="match status" value="1"/>
</dbReference>
<dbReference type="InterPro" id="IPR002107">
    <property type="entry name" value="Rotavirus_NSP4"/>
</dbReference>
<dbReference type="Pfam" id="PF01452">
    <property type="entry name" value="Rota_NSP4"/>
    <property type="match status" value="1"/>
</dbReference>
<dbReference type="SUPFAM" id="SSF58030">
    <property type="entry name" value="Rotavirus nonstructural proteins"/>
    <property type="match status" value="1"/>
</dbReference>
<accession>Q8V790</accession>
<comment type="function">
    <text evidence="1">Plays an essential role in the virus replication cycle by acting as a viroporin. Creates a pore in the host endoplasmic reticulum and as a consequence releases Ca(2+) in the cytoplasm of infected cell. In turn, high levels of cytoplasmic calcium trigger membrane trafficking and transport of viral ER-associated proteins to viroplasms, sites of viral genome replication and immature particle assembly.</text>
</comment>
<comment type="function">
    <text evidence="1">The secreted form acts as an enterotoxin that causes phospholipase C-dependent elevation of the intracellular calcium concentration in host intestinal mucosa cells. Increased concentration of intracellular calcium disrupts the cytoskeleton and the tight junctions, raising the paracellular permeability. Potentiates chloride ion secretion through a calcium ion-dependent signaling pathway, inducing age-dependent diarrhea. To perform this enterotoxigenic role in vivo, NSP4 is released from infected enterocytes in a soluble form capable of diffusing within the intestinal lumen and interacting with host plasma membrane receptors on neighboring epithelial cells such as integrins ITGA1/ITGB1 and ITGA2/ITGB1.</text>
</comment>
<comment type="subunit">
    <text evidence="1">Homotetramer. Interacts with the immature particle in the viroplasm. Interacts with host CAV1, early and late in infection. Interacts with host integrin ITGA1/ITGB1 heterodimer. Interacts with host integrin ITGA2/ITGB1 heterodimer. Interaction with microtubules blocks trafficking to the Golgi apparatus.</text>
</comment>
<comment type="subcellular location">
    <subcellularLocation>
        <location evidence="1">Host rough endoplasmic reticulum membrane</location>
        <topology evidence="1">Single-pass type III membrane protein</topology>
    </subcellularLocation>
    <subcellularLocation>
        <location evidence="1">Host membrane</location>
        <location evidence="1">Host caveola</location>
        <topology evidence="1">Single-pass type III membrane protein</topology>
    </subcellularLocation>
    <subcellularLocation>
        <location evidence="1">Secreted</location>
    </subcellularLocation>
    <text evidence="1">NSP4 also localizes in vesicular structures which contain autophagosomal markers and associate with viroplasms in virus-infected cells. Additionally, a soluble form of glycosylated NSP4 is secreted despite retention of its transmembrane domain.</text>
</comment>
<comment type="domain">
    <text evidence="1">Binds 1 calcium ion per tetramer.</text>
</comment>
<comment type="PTM">
    <text evidence="1">The N-glycosyl content is primarily Man(9)GlcNAc, with a small amount of Man(8)GlcNAc.</text>
</comment>
<comment type="similarity">
    <text evidence="1">Belongs to the rotavirus NSP4 family.</text>
</comment>
<keyword id="KW-1072">Activation of host autophagy by virus</keyword>
<keyword id="KW-0106">Calcium</keyword>
<keyword id="KW-0260">Enterotoxin</keyword>
<keyword id="KW-0325">Glycoprotein</keyword>
<keyword id="KW-1038">Host endoplasmic reticulum</keyword>
<keyword id="KW-1043">Host membrane</keyword>
<keyword id="KW-0945">Host-virus interaction</keyword>
<keyword id="KW-0407">Ion channel</keyword>
<keyword id="KW-0406">Ion transport</keyword>
<keyword id="KW-0472">Membrane</keyword>
<keyword id="KW-0479">Metal-binding</keyword>
<keyword id="KW-0964">Secreted</keyword>
<keyword id="KW-0735">Signal-anchor</keyword>
<keyword id="KW-0800">Toxin</keyword>
<keyword id="KW-0812">Transmembrane</keyword>
<keyword id="KW-1133">Transmembrane helix</keyword>
<keyword id="KW-0813">Transport</keyword>
<keyword id="KW-1182">Viral ion channel</keyword>
<keyword id="KW-0843">Virulence</keyword>
<organismHost>
    <name type="scientific">Aves</name>
    <dbReference type="NCBI Taxonomy" id="8782"/>
</organismHost>
<feature type="chain" id="PRO_0000369494" description="Non-structural glycoprotein 4">
    <location>
        <begin position="1"/>
        <end position="169"/>
    </location>
</feature>
<feature type="topological domain" description="Lumenal" evidence="1">
    <location>
        <begin position="1"/>
        <end position="28"/>
    </location>
</feature>
<feature type="transmembrane region" description="Helical; Signal-anchor for type III membrane protein" evidence="1">
    <location>
        <begin position="29"/>
        <end position="51"/>
    </location>
</feature>
<feature type="topological domain" description="Cytoplasmic" evidence="1">
    <location>
        <begin position="52"/>
        <end position="169"/>
    </location>
</feature>
<feature type="binding site" evidence="1">
    <location>
        <position position="120"/>
    </location>
    <ligand>
        <name>Ca(2+)</name>
        <dbReference type="ChEBI" id="CHEBI:29108"/>
    </ligand>
</feature>
<feature type="binding site" evidence="1">
    <location>
        <position position="123"/>
    </location>
    <ligand>
        <name>Ca(2+)</name>
        <dbReference type="ChEBI" id="CHEBI:29108"/>
    </ligand>
</feature>
<feature type="glycosylation site" description="N-linked (GlcNAc...) asparagine; by host" evidence="1">
    <location>
        <position position="8"/>
    </location>
</feature>
<sequence length="169" mass="19572">MENATTINETLVEEVYNMTMSYFEHNVIIMKYFPFLASILTIAFTAWKMGKSTFKVTKTVAGSGFKVVRVIVITIFNCIMRLFGSKTEIVSDDRLDALASKILAQINNQVKVIEQLTKRELEQVKLLADIYEMLKFKKDEVDMSFETNKKEYEKWVKDPYQPTRAVSLD</sequence>
<proteinExistence type="inferred from homology"/>
<name>NSP4_ROTA1</name>